<protein>
    <recommendedName>
        <fullName evidence="1">Large ribosomal subunit protein uL16</fullName>
    </recommendedName>
    <alternativeName>
        <fullName evidence="2">50S ribosomal protein L16</fullName>
    </alternativeName>
</protein>
<accession>B8GV51</accession>
<keyword id="KW-1185">Reference proteome</keyword>
<keyword id="KW-0687">Ribonucleoprotein</keyword>
<keyword id="KW-0689">Ribosomal protein</keyword>
<keyword id="KW-0694">RNA-binding</keyword>
<keyword id="KW-0699">rRNA-binding</keyword>
<keyword id="KW-0820">tRNA-binding</keyword>
<sequence length="137" mass="15653">MLQPKRTKFRKQFTGKNRGLAFSGGKVSFGEYALRAQDRGRLTARQIEAARRAMTRHIKRGGKIWIRVFPDVPVTKKPLEVRMGKGKGNVEYWVCKVQPGRILYEMEGVSEEIAREAFKLAAAKLPIKTQFVTRTVM</sequence>
<gene>
    <name evidence="1" type="primary">rplP</name>
    <name type="ordered locus">Tgr7_2317</name>
</gene>
<dbReference type="EMBL" id="CP001339">
    <property type="protein sequence ID" value="ACL73397.1"/>
    <property type="molecule type" value="Genomic_DNA"/>
</dbReference>
<dbReference type="RefSeq" id="WP_012638873.1">
    <property type="nucleotide sequence ID" value="NC_011901.1"/>
</dbReference>
<dbReference type="SMR" id="B8GV51"/>
<dbReference type="STRING" id="396588.Tgr7_2317"/>
<dbReference type="KEGG" id="tgr:Tgr7_2317"/>
<dbReference type="eggNOG" id="COG0197">
    <property type="taxonomic scope" value="Bacteria"/>
</dbReference>
<dbReference type="HOGENOM" id="CLU_078858_2_1_6"/>
<dbReference type="OrthoDB" id="9802589at2"/>
<dbReference type="Proteomes" id="UP000002383">
    <property type="component" value="Chromosome"/>
</dbReference>
<dbReference type="GO" id="GO:0022625">
    <property type="term" value="C:cytosolic large ribosomal subunit"/>
    <property type="evidence" value="ECO:0007669"/>
    <property type="project" value="TreeGrafter"/>
</dbReference>
<dbReference type="GO" id="GO:0019843">
    <property type="term" value="F:rRNA binding"/>
    <property type="evidence" value="ECO:0007669"/>
    <property type="project" value="UniProtKB-UniRule"/>
</dbReference>
<dbReference type="GO" id="GO:0003735">
    <property type="term" value="F:structural constituent of ribosome"/>
    <property type="evidence" value="ECO:0007669"/>
    <property type="project" value="InterPro"/>
</dbReference>
<dbReference type="GO" id="GO:0000049">
    <property type="term" value="F:tRNA binding"/>
    <property type="evidence" value="ECO:0007669"/>
    <property type="project" value="UniProtKB-KW"/>
</dbReference>
<dbReference type="GO" id="GO:0006412">
    <property type="term" value="P:translation"/>
    <property type="evidence" value="ECO:0007669"/>
    <property type="project" value="UniProtKB-UniRule"/>
</dbReference>
<dbReference type="CDD" id="cd01433">
    <property type="entry name" value="Ribosomal_L16_L10e"/>
    <property type="match status" value="1"/>
</dbReference>
<dbReference type="FunFam" id="3.90.1170.10:FF:000001">
    <property type="entry name" value="50S ribosomal protein L16"/>
    <property type="match status" value="1"/>
</dbReference>
<dbReference type="Gene3D" id="3.90.1170.10">
    <property type="entry name" value="Ribosomal protein L10e/L16"/>
    <property type="match status" value="1"/>
</dbReference>
<dbReference type="HAMAP" id="MF_01342">
    <property type="entry name" value="Ribosomal_uL16"/>
    <property type="match status" value="1"/>
</dbReference>
<dbReference type="InterPro" id="IPR047873">
    <property type="entry name" value="Ribosomal_uL16"/>
</dbReference>
<dbReference type="InterPro" id="IPR000114">
    <property type="entry name" value="Ribosomal_uL16_bact-type"/>
</dbReference>
<dbReference type="InterPro" id="IPR020798">
    <property type="entry name" value="Ribosomal_uL16_CS"/>
</dbReference>
<dbReference type="InterPro" id="IPR016180">
    <property type="entry name" value="Ribosomal_uL16_dom"/>
</dbReference>
<dbReference type="InterPro" id="IPR036920">
    <property type="entry name" value="Ribosomal_uL16_sf"/>
</dbReference>
<dbReference type="NCBIfam" id="TIGR01164">
    <property type="entry name" value="rplP_bact"/>
    <property type="match status" value="1"/>
</dbReference>
<dbReference type="PANTHER" id="PTHR12220">
    <property type="entry name" value="50S/60S RIBOSOMAL PROTEIN L16"/>
    <property type="match status" value="1"/>
</dbReference>
<dbReference type="PANTHER" id="PTHR12220:SF13">
    <property type="entry name" value="LARGE RIBOSOMAL SUBUNIT PROTEIN UL16M"/>
    <property type="match status" value="1"/>
</dbReference>
<dbReference type="Pfam" id="PF00252">
    <property type="entry name" value="Ribosomal_L16"/>
    <property type="match status" value="1"/>
</dbReference>
<dbReference type="PRINTS" id="PR00060">
    <property type="entry name" value="RIBOSOMALL16"/>
</dbReference>
<dbReference type="SUPFAM" id="SSF54686">
    <property type="entry name" value="Ribosomal protein L16p/L10e"/>
    <property type="match status" value="1"/>
</dbReference>
<dbReference type="PROSITE" id="PS00586">
    <property type="entry name" value="RIBOSOMAL_L16_1"/>
    <property type="match status" value="1"/>
</dbReference>
<dbReference type="PROSITE" id="PS00701">
    <property type="entry name" value="RIBOSOMAL_L16_2"/>
    <property type="match status" value="1"/>
</dbReference>
<proteinExistence type="inferred from homology"/>
<name>RL16_THISH</name>
<comment type="function">
    <text evidence="1">Binds 23S rRNA and is also seen to make contacts with the A and possibly P site tRNAs.</text>
</comment>
<comment type="subunit">
    <text evidence="1">Part of the 50S ribosomal subunit.</text>
</comment>
<comment type="similarity">
    <text evidence="1">Belongs to the universal ribosomal protein uL16 family.</text>
</comment>
<evidence type="ECO:0000255" key="1">
    <source>
        <dbReference type="HAMAP-Rule" id="MF_01342"/>
    </source>
</evidence>
<evidence type="ECO:0000305" key="2"/>
<feature type="chain" id="PRO_1000166388" description="Large ribosomal subunit protein uL16">
    <location>
        <begin position="1"/>
        <end position="137"/>
    </location>
</feature>
<organism>
    <name type="scientific">Thioalkalivibrio sulfidiphilus (strain HL-EbGR7)</name>
    <dbReference type="NCBI Taxonomy" id="396588"/>
    <lineage>
        <taxon>Bacteria</taxon>
        <taxon>Pseudomonadati</taxon>
        <taxon>Pseudomonadota</taxon>
        <taxon>Gammaproteobacteria</taxon>
        <taxon>Chromatiales</taxon>
        <taxon>Ectothiorhodospiraceae</taxon>
        <taxon>Thioalkalivibrio</taxon>
    </lineage>
</organism>
<reference key="1">
    <citation type="journal article" date="2011" name="Stand. Genomic Sci.">
        <title>Complete genome sequence of 'Thioalkalivibrio sulfidophilus' HL-EbGr7.</title>
        <authorList>
            <person name="Muyzer G."/>
            <person name="Sorokin D.Y."/>
            <person name="Mavromatis K."/>
            <person name="Lapidus A."/>
            <person name="Clum A."/>
            <person name="Ivanova N."/>
            <person name="Pati A."/>
            <person name="d'Haeseleer P."/>
            <person name="Woyke T."/>
            <person name="Kyrpides N.C."/>
        </authorList>
    </citation>
    <scope>NUCLEOTIDE SEQUENCE [LARGE SCALE GENOMIC DNA]</scope>
    <source>
        <strain>HL-EbGR7</strain>
    </source>
</reference>